<keyword id="KW-0227">DNA damage</keyword>
<keyword id="KW-0234">DNA repair</keyword>
<keyword id="KW-0378">Hydrolase</keyword>
<sequence length="202" mass="22771">MDFVNNDTRQIAKNLLGVKVIYQDTTQTYTGYIVETEAYLGLNDRAAHGYGGKITPKVTSLYKRGGTIYAHVMHTHLLINFVTKSEGIPEGVLIRAIEPEEGLSAMFRNRGKKGYEVTNGPGKWTKAFNIPRAIDGATLNDCRLSIDTKNRKYPKDIIASPRIGIPNKGDWTHKSLRYTVKGNPFVSRMRKSDCMFPEDTWK</sequence>
<feature type="chain" id="PRO_1000072495" description="Putative 3-methyladenine DNA glycosylase">
    <location>
        <begin position="1"/>
        <end position="202"/>
    </location>
</feature>
<protein>
    <recommendedName>
        <fullName evidence="1">Putative 3-methyladenine DNA glycosylase</fullName>
        <ecNumber evidence="1">3.2.2.-</ecNumber>
    </recommendedName>
</protein>
<comment type="similarity">
    <text evidence="1">Belongs to the DNA glycosylase MPG family.</text>
</comment>
<evidence type="ECO:0000255" key="1">
    <source>
        <dbReference type="HAMAP-Rule" id="MF_00527"/>
    </source>
</evidence>
<name>3MGH_STAAE</name>
<organism>
    <name type="scientific">Staphylococcus aureus (strain Newman)</name>
    <dbReference type="NCBI Taxonomy" id="426430"/>
    <lineage>
        <taxon>Bacteria</taxon>
        <taxon>Bacillati</taxon>
        <taxon>Bacillota</taxon>
        <taxon>Bacilli</taxon>
        <taxon>Bacillales</taxon>
        <taxon>Staphylococcaceae</taxon>
        <taxon>Staphylococcus</taxon>
    </lineage>
</organism>
<reference key="1">
    <citation type="journal article" date="2008" name="J. Bacteriol.">
        <title>Genome sequence of Staphylococcus aureus strain Newman and comparative analysis of staphylococcal genomes: polymorphism and evolution of two major pathogenicity islands.</title>
        <authorList>
            <person name="Baba T."/>
            <person name="Bae T."/>
            <person name="Schneewind O."/>
            <person name="Takeuchi F."/>
            <person name="Hiramatsu K."/>
        </authorList>
    </citation>
    <scope>NUCLEOTIDE SEQUENCE [LARGE SCALE GENOMIC DNA]</scope>
    <source>
        <strain>Newman</strain>
    </source>
</reference>
<proteinExistence type="inferred from homology"/>
<gene>
    <name type="ordered locus">NWMN_2245</name>
</gene>
<accession>A6QJI5</accession>
<dbReference type="EC" id="3.2.2.-" evidence="1"/>
<dbReference type="EMBL" id="AP009351">
    <property type="protein sequence ID" value="BAF68517.1"/>
    <property type="molecule type" value="Genomic_DNA"/>
</dbReference>
<dbReference type="RefSeq" id="WP_000348300.1">
    <property type="nucleotide sequence ID" value="NZ_JBBIAE010000004.1"/>
</dbReference>
<dbReference type="SMR" id="A6QJI5"/>
<dbReference type="KEGG" id="sae:NWMN_2245"/>
<dbReference type="HOGENOM" id="CLU_060471_2_0_9"/>
<dbReference type="Proteomes" id="UP000006386">
    <property type="component" value="Chromosome"/>
</dbReference>
<dbReference type="GO" id="GO:0003905">
    <property type="term" value="F:alkylbase DNA N-glycosylase activity"/>
    <property type="evidence" value="ECO:0007669"/>
    <property type="project" value="InterPro"/>
</dbReference>
<dbReference type="GO" id="GO:0003677">
    <property type="term" value="F:DNA binding"/>
    <property type="evidence" value="ECO:0007669"/>
    <property type="project" value="InterPro"/>
</dbReference>
<dbReference type="GO" id="GO:0006284">
    <property type="term" value="P:base-excision repair"/>
    <property type="evidence" value="ECO:0007669"/>
    <property type="project" value="InterPro"/>
</dbReference>
<dbReference type="CDD" id="cd00540">
    <property type="entry name" value="AAG"/>
    <property type="match status" value="1"/>
</dbReference>
<dbReference type="FunFam" id="3.10.300.10:FF:000001">
    <property type="entry name" value="Putative 3-methyladenine DNA glycosylase"/>
    <property type="match status" value="1"/>
</dbReference>
<dbReference type="Gene3D" id="3.10.300.10">
    <property type="entry name" value="Methylpurine-DNA glycosylase (MPG)"/>
    <property type="match status" value="1"/>
</dbReference>
<dbReference type="HAMAP" id="MF_00527">
    <property type="entry name" value="3MGH"/>
    <property type="match status" value="1"/>
</dbReference>
<dbReference type="InterPro" id="IPR011034">
    <property type="entry name" value="Formyl_transferase-like_C_sf"/>
</dbReference>
<dbReference type="InterPro" id="IPR003180">
    <property type="entry name" value="MPG"/>
</dbReference>
<dbReference type="InterPro" id="IPR036995">
    <property type="entry name" value="MPG_sf"/>
</dbReference>
<dbReference type="NCBIfam" id="TIGR00567">
    <property type="entry name" value="3mg"/>
    <property type="match status" value="1"/>
</dbReference>
<dbReference type="PANTHER" id="PTHR10429">
    <property type="entry name" value="DNA-3-METHYLADENINE GLYCOSYLASE"/>
    <property type="match status" value="1"/>
</dbReference>
<dbReference type="PANTHER" id="PTHR10429:SF0">
    <property type="entry name" value="DNA-3-METHYLADENINE GLYCOSYLASE"/>
    <property type="match status" value="1"/>
</dbReference>
<dbReference type="Pfam" id="PF02245">
    <property type="entry name" value="Pur_DNA_glyco"/>
    <property type="match status" value="1"/>
</dbReference>
<dbReference type="SUPFAM" id="SSF50486">
    <property type="entry name" value="FMT C-terminal domain-like"/>
    <property type="match status" value="1"/>
</dbReference>